<dbReference type="GO" id="GO:0031012">
    <property type="term" value="C:extracellular matrix"/>
    <property type="evidence" value="ECO:0007669"/>
    <property type="project" value="TreeGrafter"/>
</dbReference>
<dbReference type="GO" id="GO:0005615">
    <property type="term" value="C:extracellular space"/>
    <property type="evidence" value="ECO:0007669"/>
    <property type="project" value="TreeGrafter"/>
</dbReference>
<dbReference type="GO" id="GO:0030020">
    <property type="term" value="F:extracellular matrix structural constituent conferring tensile strength"/>
    <property type="evidence" value="ECO:0007669"/>
    <property type="project" value="TreeGrafter"/>
</dbReference>
<dbReference type="GO" id="GO:0030198">
    <property type="term" value="P:extracellular matrix organization"/>
    <property type="evidence" value="ECO:0007669"/>
    <property type="project" value="TreeGrafter"/>
</dbReference>
<dbReference type="InterPro" id="IPR008160">
    <property type="entry name" value="Collagen"/>
</dbReference>
<dbReference type="InterPro" id="IPR050149">
    <property type="entry name" value="Collagen_superfamily"/>
</dbReference>
<dbReference type="PANTHER" id="PTHR24023:SF1112">
    <property type="entry name" value="COL_CUTICLE_N DOMAIN-CONTAINING PROTEIN-RELATED"/>
    <property type="match status" value="1"/>
</dbReference>
<dbReference type="PANTHER" id="PTHR24023">
    <property type="entry name" value="COLLAGEN ALPHA"/>
    <property type="match status" value="1"/>
</dbReference>
<dbReference type="Pfam" id="PF01391">
    <property type="entry name" value="Collagen"/>
    <property type="match status" value="8"/>
</dbReference>
<keyword id="KW-0903">Direct protein sequencing</keyword>
<keyword id="KW-0272">Extracellular matrix</keyword>
<keyword id="KW-0325">Glycoprotein</keyword>
<keyword id="KW-0379">Hydroxylation</keyword>
<keyword id="KW-0964">Secreted</keyword>
<name>CO1A2_BRAVA</name>
<sequence length="979" mass="88144">SGGFDFSFLPQPPQEKHDGGRYYLGPGPMGLMGPRGPPGASGAPGPQGFQGPAGEPGEPGQTGPAGARGPAGPPGKAGGVVGPQGARGFPGTPGLPGFKGIRGHNGLDGLKGQPGAPGVKGEPGAPGENGTPGQTGARGLPGERGRVGAPGPAGARGSDGSVGPVGPAGPIGSAGPPGFPGAPGPKGELGPVGSTGPSGPAGPRGEQGLPGVSGPVGPPGNPGANGLTGAKGAAGLPGVAGAPGLPGPRARGLVGEPGPAGSKGESGGEPGSAGPQGPPGSSGEEGKRGPSGESGSTGPTGPPGLRGGPGSRAGVIGPAGARGASGPAGVRGRPGEPGLMGARGLPGSPGNVGPAGKEGPVGLPGIDGRPGPIGPAGARGEAGNIGFPGPKGPAGDPGKAGEKGAGNRGAPGPDGNNGAQGPPGLQGVQGGKGEQGPAGPPGFQGLPGPAGTTGEAGKPGERGIPGEFGLPGPAGPRGERGPPGESGAVGPSGAIGSRGPSGPPGPDGNKGEPGVVGAPGGSGGLPGERGAAGIPGGKGEKGETGLRGEVGTTGRDGARGAPGAVGAPGPAGATGDRGEAGAAGPAGPAGPRGSPGERGEVGPAGPNGFAGPAGAAGQPGAKGERGTKGPKGENGIVGPTGPVGSAGPAGPNGPAGPAGSRGDGGPPGATGFPGAAGRTGPPGPSGITGPPGPPGAAGKEGLRGPRGDQGPVGRGETGAGGPPGFTGEKGPSGEPGTAGPPGTAGPQGLLGAPGILGLPGSRGERGLPGVAGAVGEPGPLGIGPPGARGGRDGNPGSDGPPGRDGLPGHKGYAGNGPVGAAGAPGPHGVGPAGKHGNRGEPGPVGSVGPVGALGPRGPSGPQGIRGDKGEPGDKGPRGLPGLKGHNGLQGLPGLAGHHGDQGAPGPVGPAGPRGPAGPSGPAGKDGRTGHPGAVGPAGIRGSQGSQGPSGPPGPPGPPGPPGASGGGYDFGYEGDFYRA</sequence>
<comment type="function">
    <text evidence="5">Type I collagen is a member of group I collagen (fibrillar forming collagen).</text>
</comment>
<comment type="subunit">
    <text evidence="1">Trimers of one alpha 2(I) and two alpha 1(I) chains. Interacts (via C-terminus) with TMEM131 (via PapD-L domain); the interaction is direct and is involved in assembly and TRAPPIII ER-to-Golgi transport complex-dependent secretion of collagen.</text>
</comment>
<comment type="subcellular location">
    <subcellularLocation>
        <location>Secreted</location>
    </subcellularLocation>
    <subcellularLocation>
        <location>Secreted</location>
        <location>Extracellular space</location>
    </subcellularLocation>
    <subcellularLocation>
        <location evidence="5">Secreted</location>
        <location evidence="5">Extracellular space</location>
        <location evidence="5">Extracellular matrix</location>
    </subcellularLocation>
</comment>
<comment type="tissue specificity">
    <text evidence="3">Expressed in bones.</text>
</comment>
<comment type="PTM">
    <text evidence="1">Prolines at the third position of the tripeptide repeating unit (G-X-Y) are hydroxylated in some or all of the chains.</text>
</comment>
<comment type="similarity">
    <text evidence="5">Belongs to the fibrillar collagen family.</text>
</comment>
<protein>
    <recommendedName>
        <fullName evidence="4">Collagen alpha-2(I) chain</fullName>
    </recommendedName>
    <alternativeName>
        <fullName evidence="1">Alpha-2 type I collagen</fullName>
    </alternativeName>
</protein>
<organism evidence="4">
    <name type="scientific">Bradypus variegatus</name>
    <name type="common">Brown-throated three-fingered sloth</name>
    <dbReference type="NCBI Taxonomy" id="9355"/>
    <lineage>
        <taxon>Eukaryota</taxon>
        <taxon>Metazoa</taxon>
        <taxon>Chordata</taxon>
        <taxon>Craniata</taxon>
        <taxon>Vertebrata</taxon>
        <taxon>Euteleostomi</taxon>
        <taxon>Mammalia</taxon>
        <taxon>Eutheria</taxon>
        <taxon>Xenarthra</taxon>
        <taxon>Pilosa</taxon>
        <taxon>Folivora</taxon>
        <taxon>Bradypodidae</taxon>
        <taxon>Bradypus</taxon>
    </lineage>
</organism>
<feature type="chain" id="PRO_0000448477" description="Collagen alpha-2(I) chain">
    <location>
        <begin position="1"/>
        <end position="979"/>
    </location>
</feature>
<feature type="region of interest" description="Disordered" evidence="2">
    <location>
        <begin position="1"/>
        <end position="979"/>
    </location>
</feature>
<feature type="compositionally biased region" description="Low complexity" evidence="2">
    <location>
        <begin position="24"/>
        <end position="70"/>
    </location>
</feature>
<feature type="compositionally biased region" description="Low complexity" evidence="2">
    <location>
        <begin position="147"/>
        <end position="176"/>
    </location>
</feature>
<feature type="compositionally biased region" description="Low complexity" evidence="2">
    <location>
        <begin position="222"/>
        <end position="263"/>
    </location>
</feature>
<feature type="compositionally biased region" description="Low complexity" evidence="2">
    <location>
        <begin position="272"/>
        <end position="282"/>
    </location>
</feature>
<feature type="compositionally biased region" description="Low complexity" evidence="2">
    <location>
        <begin position="312"/>
        <end position="331"/>
    </location>
</feature>
<feature type="compositionally biased region" description="Low complexity" evidence="2">
    <location>
        <begin position="363"/>
        <end position="382"/>
    </location>
</feature>
<feature type="compositionally biased region" description="Gly residues" evidence="2">
    <location>
        <begin position="427"/>
        <end position="436"/>
    </location>
</feature>
<feature type="compositionally biased region" description="Low complexity" evidence="2">
    <location>
        <begin position="483"/>
        <end position="500"/>
    </location>
</feature>
<feature type="compositionally biased region" description="Gly residues" evidence="2">
    <location>
        <begin position="517"/>
        <end position="527"/>
    </location>
</feature>
<feature type="compositionally biased region" description="Low complexity" evidence="2">
    <location>
        <begin position="550"/>
        <end position="594"/>
    </location>
</feature>
<feature type="compositionally biased region" description="Low complexity" evidence="2">
    <location>
        <begin position="601"/>
        <end position="621"/>
    </location>
</feature>
<feature type="compositionally biased region" description="Basic and acidic residues" evidence="2">
    <location>
        <begin position="622"/>
        <end position="631"/>
    </location>
</feature>
<feature type="compositionally biased region" description="Low complexity" evidence="2">
    <location>
        <begin position="639"/>
        <end position="649"/>
    </location>
</feature>
<feature type="compositionally biased region" description="Gly residues" evidence="2">
    <location>
        <begin position="659"/>
        <end position="668"/>
    </location>
</feature>
<feature type="compositionally biased region" description="Low complexity" evidence="2">
    <location>
        <begin position="669"/>
        <end position="679"/>
    </location>
</feature>
<feature type="compositionally biased region" description="Gly residues" evidence="2">
    <location>
        <begin position="710"/>
        <end position="724"/>
    </location>
</feature>
<feature type="compositionally biased region" description="Low complexity" evidence="2">
    <location>
        <begin position="725"/>
        <end position="759"/>
    </location>
</feature>
<feature type="compositionally biased region" description="Low complexity" evidence="2">
    <location>
        <begin position="767"/>
        <end position="777"/>
    </location>
</feature>
<feature type="compositionally biased region" description="Gly residues" evidence="2">
    <location>
        <begin position="778"/>
        <end position="788"/>
    </location>
</feature>
<feature type="compositionally biased region" description="Low complexity" evidence="2">
    <location>
        <begin position="840"/>
        <end position="855"/>
    </location>
</feature>
<feature type="compositionally biased region" description="Basic and acidic residues" evidence="2">
    <location>
        <begin position="865"/>
        <end position="876"/>
    </location>
</feature>
<feature type="compositionally biased region" description="Pro residues" evidence="2">
    <location>
        <begin position="949"/>
        <end position="961"/>
    </location>
</feature>
<feature type="modified residue" description="4-hydroxyproline" evidence="1">
    <location>
        <position position="10"/>
    </location>
</feature>
<feature type="modified residue" description="4-hydroxyproline" evidence="1">
    <location>
        <position position="13"/>
    </location>
</feature>
<feature type="modified residue" description="4-hydroxyproline" evidence="1">
    <location>
        <position position="38"/>
    </location>
</feature>
<feature type="modified residue" description="4-hydroxyproline" evidence="1">
    <location>
        <position position="44"/>
    </location>
</feature>
<feature type="modified residue" description="5-hydroxylysine; alternate" evidence="1">
    <location>
        <position position="99"/>
    </location>
</feature>
<feature type="modified residue" description="4-hydroxyproline" evidence="1">
    <location>
        <position position="334"/>
    </location>
</feature>
<feature type="modified residue" description="4-hydroxyproline" evidence="1">
    <location>
        <position position="337"/>
    </location>
</feature>
<feature type="glycosylation site" description="O-linked (Gal...) hydroxylysine; alternate" evidence="1">
    <location>
        <position position="99"/>
    </location>
</feature>
<feature type="unsure residue" description="L or I" evidence="4">
    <location>
        <position position="9"/>
    </location>
</feature>
<feature type="unsure residue" description="L or I" evidence="4">
    <location>
        <position position="24"/>
    </location>
</feature>
<feature type="unsure residue" description="L or I" evidence="4">
    <location>
        <position position="31"/>
    </location>
</feature>
<feature type="unsure residue" description="L or I" evidence="4">
    <location>
        <position position="95"/>
    </location>
</feature>
<feature type="unsure residue" description="L or I" evidence="4">
    <location>
        <position position="107"/>
    </location>
</feature>
<feature type="unsure residue" description="L or I" evidence="4">
    <location>
        <position position="110"/>
    </location>
</feature>
<feature type="unsure residue" description="L or I" evidence="4">
    <location>
        <position position="140"/>
    </location>
</feature>
<feature type="unsure residue" description="L or I" evidence="4">
    <location>
        <position position="189"/>
    </location>
</feature>
<feature type="unsure residue" description="L or I" evidence="4">
    <location>
        <position position="209"/>
    </location>
</feature>
<feature type="unsure residue" description="L or I" evidence="4">
    <location>
        <position position="227"/>
    </location>
</feature>
<feature type="unsure residue" description="L or I" evidence="4">
    <location>
        <position position="236"/>
    </location>
</feature>
<feature type="unsure residue" description="L or I" evidence="4">
    <location>
        <position position="245"/>
    </location>
</feature>
<feature type="unsure residue" description="L or I" evidence="4">
    <location>
        <position position="253"/>
    </location>
</feature>
<feature type="unsure residue" description="L or I" evidence="4">
    <location>
        <position position="305"/>
    </location>
</feature>
<feature type="unsure residue" description="L or I" evidence="4">
    <location>
        <position position="339"/>
    </location>
</feature>
<feature type="unsure residue" description="L or I" evidence="4">
    <location>
        <position position="345"/>
    </location>
</feature>
<feature type="unsure residue" description="L or I" evidence="4">
    <location>
        <position position="363"/>
    </location>
</feature>
<feature type="unsure residue" description="L or I" evidence="4">
    <location>
        <position position="425"/>
    </location>
</feature>
<feature type="unsure residue" description="L or I" evidence="4">
    <location>
        <position position="446"/>
    </location>
</feature>
<feature type="unsure residue" description="L or I" evidence="4">
    <location>
        <position position="470"/>
    </location>
</feature>
<feature type="unsure residue" description="L or I" evidence="4">
    <location>
        <position position="525"/>
    </location>
</feature>
<feature type="unsure residue" description="L or I" evidence="4">
    <location>
        <position position="546"/>
    </location>
</feature>
<feature type="unsure residue" description="L or I" evidence="4">
    <location>
        <position position="702"/>
    </location>
</feature>
<feature type="unsure residue" description="L or I" evidence="4">
    <location>
        <position position="749"/>
    </location>
</feature>
<feature type="unsure residue" description="L or I" evidence="4">
    <location>
        <position position="750"/>
    </location>
</feature>
<feature type="unsure residue" description="L or I" evidence="4">
    <location>
        <position position="756"/>
    </location>
</feature>
<feature type="unsure residue" description="L or I" evidence="4">
    <location>
        <position position="758"/>
    </location>
</feature>
<feature type="unsure residue" description="L or I" evidence="4">
    <location>
        <position position="767"/>
    </location>
</feature>
<feature type="unsure residue" description="L or I" evidence="4">
    <location>
        <position position="780"/>
    </location>
</feature>
<feature type="unsure residue" description="L or I" evidence="4">
    <location>
        <position position="806"/>
    </location>
</feature>
<feature type="unsure residue" description="L or I" evidence="4">
    <location>
        <position position="853"/>
    </location>
</feature>
<feature type="unsure residue" description="L or I" evidence="4">
    <location>
        <position position="879"/>
    </location>
</feature>
<feature type="unsure residue" description="L or I" evidence="4">
    <location>
        <position position="882"/>
    </location>
</feature>
<feature type="unsure residue" description="L or I" evidence="4">
    <location>
        <position position="888"/>
    </location>
</feature>
<feature type="unsure residue" description="L or I" evidence="4">
    <location>
        <position position="891"/>
    </location>
</feature>
<feature type="unsure residue" description="L or I" evidence="4">
    <location>
        <position position="894"/>
    </location>
</feature>
<feature type="non-consecutive residues" evidence="4">
    <location>
        <begin position="16"/>
        <end position="17"/>
    </location>
</feature>
<feature type="non-consecutive residues" evidence="4">
    <location>
        <begin position="23"/>
        <end position="24"/>
    </location>
</feature>
<feature type="non-consecutive residues" evidence="4">
    <location>
        <begin position="78"/>
        <end position="79"/>
    </location>
</feature>
<feature type="non-consecutive residues" evidence="4">
    <location>
        <begin position="249"/>
        <end position="250"/>
    </location>
</feature>
<feature type="non-consecutive residues" evidence="4">
    <location>
        <begin position="267"/>
        <end position="268"/>
    </location>
</feature>
<feature type="non-consecutive residues" evidence="4">
    <location>
        <begin position="312"/>
        <end position="313"/>
    </location>
</feature>
<feature type="non-consecutive residues" evidence="4">
    <location>
        <begin position="331"/>
        <end position="332"/>
    </location>
</feature>
<feature type="non-consecutive residues" evidence="4">
    <location>
        <begin position="404"/>
        <end position="405"/>
    </location>
</feature>
<feature type="non-consecutive residues" evidence="4">
    <location>
        <begin position="470"/>
        <end position="471"/>
    </location>
</feature>
<feature type="non-consecutive residues" evidence="4">
    <location>
        <begin position="520"/>
        <end position="521"/>
    </location>
</feature>
<feature type="non-consecutive residues" evidence="4">
    <location>
        <begin position="714"/>
        <end position="715"/>
    </location>
</feature>
<feature type="non-consecutive residues" evidence="4">
    <location>
        <begin position="782"/>
        <end position="783"/>
    </location>
</feature>
<feature type="non-consecutive residues" evidence="4">
    <location>
        <begin position="789"/>
        <end position="790"/>
    </location>
</feature>
<feature type="non-consecutive residues" evidence="4">
    <location>
        <begin position="810"/>
        <end position="811"/>
    </location>
</feature>
<feature type="non-consecutive residues" evidence="4">
    <location>
        <begin position="815"/>
        <end position="816"/>
    </location>
</feature>
<feature type="non-consecutive residues" evidence="4">
    <location>
        <begin position="828"/>
        <end position="829"/>
    </location>
</feature>
<feature type="non-terminal residue" evidence="4">
    <location>
        <position position="1"/>
    </location>
</feature>
<feature type="non-terminal residue" evidence="4">
    <location>
        <position position="979"/>
    </location>
</feature>
<accession>C0HLH0</accession>
<proteinExistence type="evidence at protein level"/>
<evidence type="ECO:0000250" key="1">
    <source>
        <dbReference type="UniProtKB" id="P08123"/>
    </source>
</evidence>
<evidence type="ECO:0000256" key="2">
    <source>
        <dbReference type="SAM" id="MobiDB-lite"/>
    </source>
</evidence>
<evidence type="ECO:0000269" key="3">
    <source>
    </source>
</evidence>
<evidence type="ECO:0000303" key="4">
    <source>
    </source>
</evidence>
<evidence type="ECO:0000305" key="5"/>
<reference evidence="5" key="1">
    <citation type="journal article" date="2019" name="Nat. Ecol. Evol.">
        <title>Palaeoproteomics resolves sloth relationships.</title>
        <authorList>
            <person name="Presslee S."/>
            <person name="Slater G.J."/>
            <person name="Pujos F."/>
            <person name="Forasiepi A.M."/>
            <person name="Fischer R."/>
            <person name="Molloy K."/>
            <person name="Mackie M."/>
            <person name="Olsen J.V."/>
            <person name="Kramarz A."/>
            <person name="Taglioretti M."/>
            <person name="Scaglia F."/>
            <person name="Lezcano M."/>
            <person name="Lanata J.L."/>
            <person name="Southon J."/>
            <person name="Feranec R."/>
            <person name="Bloch J."/>
            <person name="Hajduk A."/>
            <person name="Martin F.M."/>
            <person name="Salas Gismondi R."/>
            <person name="Reguero M."/>
            <person name="de Muizon C."/>
            <person name="Greenwood A."/>
            <person name="Chait B.T."/>
            <person name="Penkman K."/>
            <person name="Collins M."/>
            <person name="MacPhee R.D.E."/>
        </authorList>
    </citation>
    <scope>PROTEIN SEQUENCE</scope>
    <scope>TISSUE SPECIFICITY</scope>
    <scope>IDENTIFICATION BY MASS SPECTROMETRY</scope>
    <source>
        <tissue evidence="4">Bone</tissue>
    </source>
</reference>